<proteinExistence type="inferred from homology"/>
<accession>Q4AA71</accession>
<sequence>MAIAIIAEYNPFHNGHIYQLEYTKKNFPNDKIYIILSGNFTQRGEISLADFKTKSKIALKYGADFIIKLPFEYATQAAHIFAKGAIKIVNQHKIDKIIFGSESNDVENLYKLANLWNQNQEAYNAFLKYALKLGYSFPKASAFALEEISGQKIVFPNDILGFEYIKQIVANNYPIRAYTLKRSEEFSLKNPEPNIASATYLRQLVNENKSISRFSPMKFIHPVCSLANLYPEFQKIVRETSPENLAKIWLISEGIENLFKKHINEPNFEKFLNAVNSRRYTNSRIKRAMVYILFRIEDPSQFDEEKIQLDCWKNQGF</sequence>
<comment type="function">
    <text evidence="1">Catalyzes the formation of N(4)-acetylcytidine (ac(4)C) at the wobble position of elongator tRNA(Met), using acetate and ATP as substrates. First activates an acetate ion to form acetyladenylate (Ac-AMP) and then transfers the acetyl group to tRNA to form ac(4)C34.</text>
</comment>
<comment type="catalytic activity">
    <reaction evidence="1">
        <text>cytidine(34) in elongator tRNA(Met) + acetate + ATP = N(4)-acetylcytidine(34) in elongator tRNA(Met) + AMP + diphosphate</text>
        <dbReference type="Rhea" id="RHEA:58144"/>
        <dbReference type="Rhea" id="RHEA-COMP:10693"/>
        <dbReference type="Rhea" id="RHEA-COMP:10694"/>
        <dbReference type="ChEBI" id="CHEBI:30089"/>
        <dbReference type="ChEBI" id="CHEBI:30616"/>
        <dbReference type="ChEBI" id="CHEBI:33019"/>
        <dbReference type="ChEBI" id="CHEBI:74900"/>
        <dbReference type="ChEBI" id="CHEBI:82748"/>
        <dbReference type="ChEBI" id="CHEBI:456215"/>
    </reaction>
</comment>
<comment type="subcellular location">
    <subcellularLocation>
        <location evidence="1">Cytoplasm</location>
    </subcellularLocation>
</comment>
<comment type="similarity">
    <text evidence="1">Belongs to the TmcAL family.</text>
</comment>
<keyword id="KW-0067">ATP-binding</keyword>
<keyword id="KW-0963">Cytoplasm</keyword>
<keyword id="KW-0436">Ligase</keyword>
<keyword id="KW-0547">Nucleotide-binding</keyword>
<keyword id="KW-0694">RNA-binding</keyword>
<keyword id="KW-0819">tRNA processing</keyword>
<keyword id="KW-0820">tRNA-binding</keyword>
<gene>
    <name evidence="1" type="primary">tmcAL</name>
    <name type="ordered locus">MHJ_0259</name>
</gene>
<organism>
    <name type="scientific">Mesomycoplasma hyopneumoniae (strain J / ATCC 25934 / NCTC 10110)</name>
    <name type="common">Mycoplasma hyopneumoniae</name>
    <dbReference type="NCBI Taxonomy" id="262719"/>
    <lineage>
        <taxon>Bacteria</taxon>
        <taxon>Bacillati</taxon>
        <taxon>Mycoplasmatota</taxon>
        <taxon>Mycoplasmoidales</taxon>
        <taxon>Metamycoplasmataceae</taxon>
        <taxon>Mesomycoplasma</taxon>
    </lineage>
</organism>
<reference key="1">
    <citation type="journal article" date="2005" name="J. Bacteriol.">
        <title>Swine and poultry pathogens: the complete genome sequences of two strains of Mycoplasma hyopneumoniae and a strain of Mycoplasma synoviae.</title>
        <authorList>
            <person name="Vasconcelos A.T.R."/>
            <person name="Ferreira H.B."/>
            <person name="Bizarro C.V."/>
            <person name="Bonatto S.L."/>
            <person name="Carvalho M.O."/>
            <person name="Pinto P.M."/>
            <person name="Almeida D.F."/>
            <person name="Almeida L.G.P."/>
            <person name="Almeida R."/>
            <person name="Alves-Junior L."/>
            <person name="Assuncao E.N."/>
            <person name="Azevedo V.A.C."/>
            <person name="Bogo M.R."/>
            <person name="Brigido M.M."/>
            <person name="Brocchi M."/>
            <person name="Burity H.A."/>
            <person name="Camargo A.A."/>
            <person name="Camargo S.S."/>
            <person name="Carepo M.S."/>
            <person name="Carraro D.M."/>
            <person name="de Mattos Cascardo J.C."/>
            <person name="Castro L.A."/>
            <person name="Cavalcanti G."/>
            <person name="Chemale G."/>
            <person name="Collevatti R.G."/>
            <person name="Cunha C.W."/>
            <person name="Dallagiovanna B."/>
            <person name="Dambros B.P."/>
            <person name="Dellagostin O.A."/>
            <person name="Falcao C."/>
            <person name="Fantinatti-Garboggini F."/>
            <person name="Felipe M.S.S."/>
            <person name="Fiorentin L."/>
            <person name="Franco G.R."/>
            <person name="Freitas N.S.A."/>
            <person name="Frias D."/>
            <person name="Grangeiro T.B."/>
            <person name="Grisard E.C."/>
            <person name="Guimaraes C.T."/>
            <person name="Hungria M."/>
            <person name="Jardim S.N."/>
            <person name="Krieger M.A."/>
            <person name="Laurino J.P."/>
            <person name="Lima L.F.A."/>
            <person name="Lopes M.I."/>
            <person name="Loreto E.L.S."/>
            <person name="Madeira H.M.F."/>
            <person name="Manfio G.P."/>
            <person name="Maranhao A.Q."/>
            <person name="Martinkovics C.T."/>
            <person name="Medeiros S.R.B."/>
            <person name="Moreira M.A.M."/>
            <person name="Neiva M."/>
            <person name="Ramalho-Neto C.E."/>
            <person name="Nicolas M.F."/>
            <person name="Oliveira S.C."/>
            <person name="Paixao R.F.C."/>
            <person name="Pedrosa F.O."/>
            <person name="Pena S.D.J."/>
            <person name="Pereira M."/>
            <person name="Pereira-Ferrari L."/>
            <person name="Piffer I."/>
            <person name="Pinto L.S."/>
            <person name="Potrich D.P."/>
            <person name="Salim A.C.M."/>
            <person name="Santos F.R."/>
            <person name="Schmitt R."/>
            <person name="Schneider M.P.C."/>
            <person name="Schrank A."/>
            <person name="Schrank I.S."/>
            <person name="Schuck A.F."/>
            <person name="Seuanez H.N."/>
            <person name="Silva D.W."/>
            <person name="Silva R."/>
            <person name="Silva S.C."/>
            <person name="Soares C.M.A."/>
            <person name="Souza K.R.L."/>
            <person name="Souza R.C."/>
            <person name="Staats C.C."/>
            <person name="Steffens M.B.R."/>
            <person name="Teixeira S.M.R."/>
            <person name="Urmenyi T.P."/>
            <person name="Vainstein M.H."/>
            <person name="Zuccherato L.W."/>
            <person name="Simpson A.J.G."/>
            <person name="Zaha A."/>
        </authorList>
    </citation>
    <scope>NUCLEOTIDE SEQUENCE [LARGE SCALE GENOMIC DNA]</scope>
    <source>
        <strain>J / ATCC 25934 / NCTC 10110</strain>
    </source>
</reference>
<evidence type="ECO:0000255" key="1">
    <source>
        <dbReference type="HAMAP-Rule" id="MF_01539"/>
    </source>
</evidence>
<dbReference type="EC" id="6.3.4.-" evidence="1"/>
<dbReference type="EMBL" id="AE017243">
    <property type="protein sequence ID" value="AAZ44350.1"/>
    <property type="molecule type" value="Genomic_DNA"/>
</dbReference>
<dbReference type="RefSeq" id="WP_011284038.1">
    <property type="nucleotide sequence ID" value="NC_007295.1"/>
</dbReference>
<dbReference type="SMR" id="Q4AA71"/>
<dbReference type="GeneID" id="41334565"/>
<dbReference type="KEGG" id="mhj:MHJ_0259"/>
<dbReference type="eggNOG" id="COG1323">
    <property type="taxonomic scope" value="Bacteria"/>
</dbReference>
<dbReference type="HOGENOM" id="CLU_038915_1_0_14"/>
<dbReference type="OrthoDB" id="9769796at2"/>
<dbReference type="Proteomes" id="UP000000548">
    <property type="component" value="Chromosome"/>
</dbReference>
<dbReference type="GO" id="GO:0005737">
    <property type="term" value="C:cytoplasm"/>
    <property type="evidence" value="ECO:0007669"/>
    <property type="project" value="UniProtKB-SubCell"/>
</dbReference>
<dbReference type="GO" id="GO:0005524">
    <property type="term" value="F:ATP binding"/>
    <property type="evidence" value="ECO:0007669"/>
    <property type="project" value="UniProtKB-KW"/>
</dbReference>
<dbReference type="GO" id="GO:0016879">
    <property type="term" value="F:ligase activity, forming carbon-nitrogen bonds"/>
    <property type="evidence" value="ECO:0007669"/>
    <property type="project" value="UniProtKB-UniRule"/>
</dbReference>
<dbReference type="GO" id="GO:0000049">
    <property type="term" value="F:tRNA binding"/>
    <property type="evidence" value="ECO:0007669"/>
    <property type="project" value="UniProtKB-KW"/>
</dbReference>
<dbReference type="GO" id="GO:0006400">
    <property type="term" value="P:tRNA modification"/>
    <property type="evidence" value="ECO:0007669"/>
    <property type="project" value="UniProtKB-UniRule"/>
</dbReference>
<dbReference type="Gene3D" id="3.40.50.620">
    <property type="entry name" value="HUPs"/>
    <property type="match status" value="1"/>
</dbReference>
<dbReference type="HAMAP" id="MF_01539">
    <property type="entry name" value="TmcAL"/>
    <property type="match status" value="1"/>
</dbReference>
<dbReference type="InterPro" id="IPR014729">
    <property type="entry name" value="Rossmann-like_a/b/a_fold"/>
</dbReference>
<dbReference type="InterPro" id="IPR008513">
    <property type="entry name" value="tRNA(Met)_cyd_acetate_ligase"/>
</dbReference>
<dbReference type="NCBIfam" id="NF010192">
    <property type="entry name" value="PRK13671.1"/>
    <property type="match status" value="1"/>
</dbReference>
<dbReference type="PANTHER" id="PTHR37825">
    <property type="entry name" value="TRNA(MET) CYTIDINE ACETATE LIGASE"/>
    <property type="match status" value="1"/>
</dbReference>
<dbReference type="PANTHER" id="PTHR37825:SF1">
    <property type="entry name" value="TRNA(MET) CYTIDINE ACETATE LIGASE"/>
    <property type="match status" value="1"/>
</dbReference>
<dbReference type="Pfam" id="PF05636">
    <property type="entry name" value="HIGH_NTase1"/>
    <property type="match status" value="1"/>
</dbReference>
<dbReference type="SUPFAM" id="SSF52374">
    <property type="entry name" value="Nucleotidylyl transferase"/>
    <property type="match status" value="1"/>
</dbReference>
<feature type="chain" id="PRO_0000300183" description="tRNA(Met) cytidine acetate ligase">
    <location>
        <begin position="1"/>
        <end position="317"/>
    </location>
</feature>
<feature type="binding site" evidence="1">
    <location>
        <begin position="6"/>
        <end position="19"/>
    </location>
    <ligand>
        <name>ATP</name>
        <dbReference type="ChEBI" id="CHEBI:30616"/>
    </ligand>
</feature>
<feature type="binding site" evidence="1">
    <location>
        <position position="100"/>
    </location>
    <ligand>
        <name>ATP</name>
        <dbReference type="ChEBI" id="CHEBI:30616"/>
    </ligand>
</feature>
<feature type="binding site" evidence="1">
    <location>
        <position position="157"/>
    </location>
    <ligand>
        <name>ATP</name>
        <dbReference type="ChEBI" id="CHEBI:30616"/>
    </ligand>
</feature>
<feature type="binding site" evidence="1">
    <location>
        <position position="182"/>
    </location>
    <ligand>
        <name>ATP</name>
        <dbReference type="ChEBI" id="CHEBI:30616"/>
    </ligand>
</feature>
<protein>
    <recommendedName>
        <fullName evidence="1">tRNA(Met) cytidine acetate ligase</fullName>
        <ecNumber evidence="1">6.3.4.-</ecNumber>
    </recommendedName>
</protein>
<name>TMCAL_MESHJ</name>